<keyword id="KW-0963">Cytoplasm</keyword>
<keyword id="KW-0396">Initiation factor</keyword>
<keyword id="KW-0648">Protein biosynthesis</keyword>
<keyword id="KW-1185">Reference proteome</keyword>
<keyword id="KW-0694">RNA-binding</keyword>
<keyword id="KW-0699">rRNA-binding</keyword>
<comment type="function">
    <text evidence="1">One of the essential components for the initiation of protein synthesis. Stabilizes the binding of IF-2 and IF-3 on the 30S subunit to which N-formylmethionyl-tRNA(fMet) subsequently binds. Helps modulate mRNA selection, yielding the 30S pre-initiation complex (PIC). Upon addition of the 50S ribosomal subunit IF-1, IF-2 and IF-3 are released leaving the mature 70S translation initiation complex.</text>
</comment>
<comment type="subunit">
    <text evidence="1">Component of the 30S ribosomal translation pre-initiation complex which assembles on the 30S ribosome in the order IF-2 and IF-3, IF-1 and N-formylmethionyl-tRNA(fMet); mRNA recruitment can occur at any time during PIC assembly.</text>
</comment>
<comment type="subcellular location">
    <subcellularLocation>
        <location evidence="1">Cytoplasm</location>
    </subcellularLocation>
</comment>
<comment type="similarity">
    <text evidence="1">Belongs to the IF-1 family.</text>
</comment>
<dbReference type="EMBL" id="CP000387">
    <property type="protein sequence ID" value="ABN43591.1"/>
    <property type="molecule type" value="Genomic_DNA"/>
</dbReference>
<dbReference type="RefSeq" id="WP_001029883.1">
    <property type="nucleotide sequence ID" value="NZ_CAXTYR010000005.1"/>
</dbReference>
<dbReference type="RefSeq" id="YP_001034141.1">
    <property type="nucleotide sequence ID" value="NC_009009.1"/>
</dbReference>
<dbReference type="SMR" id="A3CK86"/>
<dbReference type="STRING" id="388919.SSA_0129"/>
<dbReference type="GeneID" id="93964223"/>
<dbReference type="KEGG" id="ssa:SSA_0129"/>
<dbReference type="PATRIC" id="fig|388919.9.peg.123"/>
<dbReference type="eggNOG" id="COG0361">
    <property type="taxonomic scope" value="Bacteria"/>
</dbReference>
<dbReference type="HOGENOM" id="CLU_151267_1_0_9"/>
<dbReference type="OrthoDB" id="9803250at2"/>
<dbReference type="PRO" id="PR:A3CK86"/>
<dbReference type="Proteomes" id="UP000002148">
    <property type="component" value="Chromosome"/>
</dbReference>
<dbReference type="GO" id="GO:0005829">
    <property type="term" value="C:cytosol"/>
    <property type="evidence" value="ECO:0007669"/>
    <property type="project" value="TreeGrafter"/>
</dbReference>
<dbReference type="GO" id="GO:0043022">
    <property type="term" value="F:ribosome binding"/>
    <property type="evidence" value="ECO:0007669"/>
    <property type="project" value="UniProtKB-UniRule"/>
</dbReference>
<dbReference type="GO" id="GO:0019843">
    <property type="term" value="F:rRNA binding"/>
    <property type="evidence" value="ECO:0007669"/>
    <property type="project" value="UniProtKB-UniRule"/>
</dbReference>
<dbReference type="GO" id="GO:0003743">
    <property type="term" value="F:translation initiation factor activity"/>
    <property type="evidence" value="ECO:0007669"/>
    <property type="project" value="UniProtKB-UniRule"/>
</dbReference>
<dbReference type="CDD" id="cd04451">
    <property type="entry name" value="S1_IF1"/>
    <property type="match status" value="1"/>
</dbReference>
<dbReference type="FunFam" id="2.40.50.140:FF:000002">
    <property type="entry name" value="Translation initiation factor IF-1"/>
    <property type="match status" value="1"/>
</dbReference>
<dbReference type="Gene3D" id="2.40.50.140">
    <property type="entry name" value="Nucleic acid-binding proteins"/>
    <property type="match status" value="1"/>
</dbReference>
<dbReference type="HAMAP" id="MF_00075">
    <property type="entry name" value="IF_1"/>
    <property type="match status" value="1"/>
</dbReference>
<dbReference type="InterPro" id="IPR012340">
    <property type="entry name" value="NA-bd_OB-fold"/>
</dbReference>
<dbReference type="InterPro" id="IPR006196">
    <property type="entry name" value="RNA-binding_domain_S1_IF1"/>
</dbReference>
<dbReference type="InterPro" id="IPR003029">
    <property type="entry name" value="S1_domain"/>
</dbReference>
<dbReference type="InterPro" id="IPR004368">
    <property type="entry name" value="TIF_IF1"/>
</dbReference>
<dbReference type="NCBIfam" id="TIGR00008">
    <property type="entry name" value="infA"/>
    <property type="match status" value="1"/>
</dbReference>
<dbReference type="PANTHER" id="PTHR33370">
    <property type="entry name" value="TRANSLATION INITIATION FACTOR IF-1, CHLOROPLASTIC"/>
    <property type="match status" value="1"/>
</dbReference>
<dbReference type="PANTHER" id="PTHR33370:SF1">
    <property type="entry name" value="TRANSLATION INITIATION FACTOR IF-1, CHLOROPLASTIC"/>
    <property type="match status" value="1"/>
</dbReference>
<dbReference type="Pfam" id="PF01176">
    <property type="entry name" value="eIF-1a"/>
    <property type="match status" value="1"/>
</dbReference>
<dbReference type="SMART" id="SM00316">
    <property type="entry name" value="S1"/>
    <property type="match status" value="1"/>
</dbReference>
<dbReference type="SUPFAM" id="SSF50249">
    <property type="entry name" value="Nucleic acid-binding proteins"/>
    <property type="match status" value="1"/>
</dbReference>
<dbReference type="PROSITE" id="PS50832">
    <property type="entry name" value="S1_IF1_TYPE"/>
    <property type="match status" value="1"/>
</dbReference>
<proteinExistence type="inferred from homology"/>
<gene>
    <name evidence="1" type="primary">infA</name>
    <name type="ordered locus">SSA_0129</name>
</gene>
<feature type="chain" id="PRO_0000338937" description="Translation initiation factor IF-1">
    <location>
        <begin position="1"/>
        <end position="72"/>
    </location>
</feature>
<feature type="domain" description="S1-like" evidence="1">
    <location>
        <begin position="1"/>
        <end position="72"/>
    </location>
</feature>
<evidence type="ECO:0000255" key="1">
    <source>
        <dbReference type="HAMAP-Rule" id="MF_00075"/>
    </source>
</evidence>
<sequence>MAKDDVIEVEGKVVDTMPNAMFTVELENGHQILATVSGKIRKNYIRILAGDRVTVEMSPYDLTRGRITYRFK</sequence>
<name>IF1_STRSV</name>
<reference key="1">
    <citation type="journal article" date="2007" name="J. Bacteriol.">
        <title>Genome of the opportunistic pathogen Streptococcus sanguinis.</title>
        <authorList>
            <person name="Xu P."/>
            <person name="Alves J.M."/>
            <person name="Kitten T."/>
            <person name="Brown A."/>
            <person name="Chen Z."/>
            <person name="Ozaki L.S."/>
            <person name="Manque P."/>
            <person name="Ge X."/>
            <person name="Serrano M.G."/>
            <person name="Puiu D."/>
            <person name="Hendricks S."/>
            <person name="Wang Y."/>
            <person name="Chaplin M.D."/>
            <person name="Akan D."/>
            <person name="Paik S."/>
            <person name="Peterson D.L."/>
            <person name="Macrina F.L."/>
            <person name="Buck G.A."/>
        </authorList>
    </citation>
    <scope>NUCLEOTIDE SEQUENCE [LARGE SCALE GENOMIC DNA]</scope>
    <source>
        <strain>SK36</strain>
    </source>
</reference>
<organism>
    <name type="scientific">Streptococcus sanguinis (strain SK36)</name>
    <dbReference type="NCBI Taxonomy" id="388919"/>
    <lineage>
        <taxon>Bacteria</taxon>
        <taxon>Bacillati</taxon>
        <taxon>Bacillota</taxon>
        <taxon>Bacilli</taxon>
        <taxon>Lactobacillales</taxon>
        <taxon>Streptococcaceae</taxon>
        <taxon>Streptococcus</taxon>
    </lineage>
</organism>
<accession>A3CK86</accession>
<protein>
    <recommendedName>
        <fullName evidence="1">Translation initiation factor IF-1</fullName>
    </recommendedName>
</protein>